<feature type="chain" id="PRO_1000010201" description="Ribosomal RNA small subunit methyltransferase G">
    <location>
        <begin position="1"/>
        <end position="208"/>
    </location>
</feature>
<feature type="binding site" evidence="1">
    <location>
        <position position="74"/>
    </location>
    <ligand>
        <name>S-adenosyl-L-methionine</name>
        <dbReference type="ChEBI" id="CHEBI:59789"/>
    </ligand>
</feature>
<feature type="binding site" evidence="1">
    <location>
        <position position="79"/>
    </location>
    <ligand>
        <name>S-adenosyl-L-methionine</name>
        <dbReference type="ChEBI" id="CHEBI:59789"/>
    </ligand>
</feature>
<feature type="binding site" evidence="1">
    <location>
        <begin position="125"/>
        <end position="126"/>
    </location>
    <ligand>
        <name>S-adenosyl-L-methionine</name>
        <dbReference type="ChEBI" id="CHEBI:59789"/>
    </ligand>
</feature>
<feature type="binding site" evidence="1">
    <location>
        <position position="140"/>
    </location>
    <ligand>
        <name>S-adenosyl-L-methionine</name>
        <dbReference type="ChEBI" id="CHEBI:59789"/>
    </ligand>
</feature>
<sequence length="208" mass="23577">MLSSQLSAYLAEMNLSATEQQQGQLVGFVEMLNKWNKAYNLTSVRSPEQMLIRHVMDSLTVSPYLSGKRFIDVGTGPGLPGIPLAIMNPDKEFVLLDSLGKRIRFQKQVQFELKINNISSVESRVEAFQPEIKFDGVLSRAFASVQDMLTWCHHLPHNEGIFYALKGQLNQVELEAIPEGFELLETIVLQVPQLDEQRHLLKLRKKLG</sequence>
<reference key="1">
    <citation type="submission" date="2006-03" db="EMBL/GenBank/DDBJ databases">
        <title>Complete sequence of Shewanella denitrificans OS217.</title>
        <authorList>
            <consortium name="US DOE Joint Genome Institute"/>
            <person name="Copeland A."/>
            <person name="Lucas S."/>
            <person name="Lapidus A."/>
            <person name="Barry K."/>
            <person name="Detter J.C."/>
            <person name="Glavina del Rio T."/>
            <person name="Hammon N."/>
            <person name="Israni S."/>
            <person name="Dalin E."/>
            <person name="Tice H."/>
            <person name="Pitluck S."/>
            <person name="Brettin T."/>
            <person name="Bruce D."/>
            <person name="Han C."/>
            <person name="Tapia R."/>
            <person name="Gilna P."/>
            <person name="Kiss H."/>
            <person name="Schmutz J."/>
            <person name="Larimer F."/>
            <person name="Land M."/>
            <person name="Hauser L."/>
            <person name="Kyrpides N."/>
            <person name="Lykidis A."/>
            <person name="Richardson P."/>
        </authorList>
    </citation>
    <scope>NUCLEOTIDE SEQUENCE [LARGE SCALE GENOMIC DNA]</scope>
    <source>
        <strain>OS217 / ATCC BAA-1090 / DSM 15013</strain>
    </source>
</reference>
<keyword id="KW-0963">Cytoplasm</keyword>
<keyword id="KW-0489">Methyltransferase</keyword>
<keyword id="KW-1185">Reference proteome</keyword>
<keyword id="KW-0698">rRNA processing</keyword>
<keyword id="KW-0949">S-adenosyl-L-methionine</keyword>
<keyword id="KW-0808">Transferase</keyword>
<gene>
    <name evidence="1" type="primary">rsmG</name>
    <name type="ordered locus">Sden_3762</name>
</gene>
<comment type="function">
    <text evidence="1">Specifically methylates the N7 position of guanine in position 527 of 16S rRNA.</text>
</comment>
<comment type="catalytic activity">
    <reaction evidence="1">
        <text>guanosine(527) in 16S rRNA + S-adenosyl-L-methionine = N(7)-methylguanosine(527) in 16S rRNA + S-adenosyl-L-homocysteine</text>
        <dbReference type="Rhea" id="RHEA:42732"/>
        <dbReference type="Rhea" id="RHEA-COMP:10209"/>
        <dbReference type="Rhea" id="RHEA-COMP:10210"/>
        <dbReference type="ChEBI" id="CHEBI:57856"/>
        <dbReference type="ChEBI" id="CHEBI:59789"/>
        <dbReference type="ChEBI" id="CHEBI:74269"/>
        <dbReference type="ChEBI" id="CHEBI:74480"/>
        <dbReference type="EC" id="2.1.1.170"/>
    </reaction>
</comment>
<comment type="subcellular location">
    <subcellularLocation>
        <location evidence="1">Cytoplasm</location>
    </subcellularLocation>
</comment>
<comment type="similarity">
    <text evidence="1">Belongs to the methyltransferase superfamily. RNA methyltransferase RsmG family.</text>
</comment>
<accession>Q12HP1</accession>
<name>RSMG_SHEDO</name>
<dbReference type="EC" id="2.1.1.170" evidence="1"/>
<dbReference type="EMBL" id="CP000302">
    <property type="protein sequence ID" value="ABE57035.1"/>
    <property type="molecule type" value="Genomic_DNA"/>
</dbReference>
<dbReference type="RefSeq" id="WP_011498173.1">
    <property type="nucleotide sequence ID" value="NC_007954.1"/>
</dbReference>
<dbReference type="SMR" id="Q12HP1"/>
<dbReference type="STRING" id="318161.Sden_3762"/>
<dbReference type="KEGG" id="sdn:Sden_3762"/>
<dbReference type="eggNOG" id="COG0357">
    <property type="taxonomic scope" value="Bacteria"/>
</dbReference>
<dbReference type="HOGENOM" id="CLU_065341_2_0_6"/>
<dbReference type="OrthoDB" id="9808773at2"/>
<dbReference type="Proteomes" id="UP000001982">
    <property type="component" value="Chromosome"/>
</dbReference>
<dbReference type="GO" id="GO:0005829">
    <property type="term" value="C:cytosol"/>
    <property type="evidence" value="ECO:0007669"/>
    <property type="project" value="TreeGrafter"/>
</dbReference>
<dbReference type="GO" id="GO:0070043">
    <property type="term" value="F:rRNA (guanine-N7-)-methyltransferase activity"/>
    <property type="evidence" value="ECO:0007669"/>
    <property type="project" value="UniProtKB-UniRule"/>
</dbReference>
<dbReference type="CDD" id="cd02440">
    <property type="entry name" value="AdoMet_MTases"/>
    <property type="match status" value="1"/>
</dbReference>
<dbReference type="FunFam" id="3.40.50.150:FF:000032">
    <property type="entry name" value="Ribosomal RNA small subunit methyltransferase G"/>
    <property type="match status" value="1"/>
</dbReference>
<dbReference type="Gene3D" id="3.40.50.150">
    <property type="entry name" value="Vaccinia Virus protein VP39"/>
    <property type="match status" value="1"/>
</dbReference>
<dbReference type="HAMAP" id="MF_00074">
    <property type="entry name" value="16SrRNA_methyltr_G"/>
    <property type="match status" value="1"/>
</dbReference>
<dbReference type="InterPro" id="IPR003682">
    <property type="entry name" value="rRNA_ssu_MeTfrase_G"/>
</dbReference>
<dbReference type="InterPro" id="IPR029063">
    <property type="entry name" value="SAM-dependent_MTases_sf"/>
</dbReference>
<dbReference type="NCBIfam" id="TIGR00138">
    <property type="entry name" value="rsmG_gidB"/>
    <property type="match status" value="1"/>
</dbReference>
<dbReference type="PANTHER" id="PTHR31760">
    <property type="entry name" value="S-ADENOSYL-L-METHIONINE-DEPENDENT METHYLTRANSFERASES SUPERFAMILY PROTEIN"/>
    <property type="match status" value="1"/>
</dbReference>
<dbReference type="PANTHER" id="PTHR31760:SF0">
    <property type="entry name" value="S-ADENOSYL-L-METHIONINE-DEPENDENT METHYLTRANSFERASES SUPERFAMILY PROTEIN"/>
    <property type="match status" value="1"/>
</dbReference>
<dbReference type="Pfam" id="PF02527">
    <property type="entry name" value="GidB"/>
    <property type="match status" value="1"/>
</dbReference>
<dbReference type="PIRSF" id="PIRSF003078">
    <property type="entry name" value="GidB"/>
    <property type="match status" value="1"/>
</dbReference>
<dbReference type="SUPFAM" id="SSF53335">
    <property type="entry name" value="S-adenosyl-L-methionine-dependent methyltransferases"/>
    <property type="match status" value="1"/>
</dbReference>
<organism>
    <name type="scientific">Shewanella denitrificans (strain OS217 / ATCC BAA-1090 / DSM 15013)</name>
    <dbReference type="NCBI Taxonomy" id="318161"/>
    <lineage>
        <taxon>Bacteria</taxon>
        <taxon>Pseudomonadati</taxon>
        <taxon>Pseudomonadota</taxon>
        <taxon>Gammaproteobacteria</taxon>
        <taxon>Alteromonadales</taxon>
        <taxon>Shewanellaceae</taxon>
        <taxon>Shewanella</taxon>
    </lineage>
</organism>
<evidence type="ECO:0000255" key="1">
    <source>
        <dbReference type="HAMAP-Rule" id="MF_00074"/>
    </source>
</evidence>
<proteinExistence type="inferred from homology"/>
<protein>
    <recommendedName>
        <fullName evidence="1">Ribosomal RNA small subunit methyltransferase G</fullName>
        <ecNumber evidence="1">2.1.1.170</ecNumber>
    </recommendedName>
    <alternativeName>
        <fullName evidence="1">16S rRNA 7-methylguanosine methyltransferase</fullName>
        <shortName evidence="1">16S rRNA m7G methyltransferase</shortName>
    </alternativeName>
</protein>